<organism>
    <name type="scientific">Brucella melitensis biotype 2 (strain ATCC 23457)</name>
    <dbReference type="NCBI Taxonomy" id="546272"/>
    <lineage>
        <taxon>Bacteria</taxon>
        <taxon>Pseudomonadati</taxon>
        <taxon>Pseudomonadota</taxon>
        <taxon>Alphaproteobacteria</taxon>
        <taxon>Hyphomicrobiales</taxon>
        <taxon>Brucellaceae</taxon>
        <taxon>Brucella/Ochrobactrum group</taxon>
        <taxon>Brucella</taxon>
    </lineage>
</organism>
<protein>
    <recommendedName>
        <fullName evidence="1">Small ribosomal subunit protein bS20</fullName>
    </recommendedName>
    <alternativeName>
        <fullName evidence="2">30S ribosomal protein S20</fullName>
    </alternativeName>
</protein>
<accession>C0RG67</accession>
<dbReference type="EMBL" id="CP001488">
    <property type="protein sequence ID" value="ACO01889.1"/>
    <property type="molecule type" value="Genomic_DNA"/>
</dbReference>
<dbReference type="RefSeq" id="WP_002965247.1">
    <property type="nucleotide sequence ID" value="NC_012441.1"/>
</dbReference>
<dbReference type="SMR" id="C0RG67"/>
<dbReference type="GeneID" id="97534562"/>
<dbReference type="KEGG" id="bmi:BMEA_A2246"/>
<dbReference type="HOGENOM" id="CLU_160655_3_0_5"/>
<dbReference type="Proteomes" id="UP000001748">
    <property type="component" value="Chromosome I"/>
</dbReference>
<dbReference type="GO" id="GO:0015935">
    <property type="term" value="C:small ribosomal subunit"/>
    <property type="evidence" value="ECO:0007669"/>
    <property type="project" value="TreeGrafter"/>
</dbReference>
<dbReference type="GO" id="GO:0070181">
    <property type="term" value="F:small ribosomal subunit rRNA binding"/>
    <property type="evidence" value="ECO:0007669"/>
    <property type="project" value="TreeGrafter"/>
</dbReference>
<dbReference type="GO" id="GO:0003735">
    <property type="term" value="F:structural constituent of ribosome"/>
    <property type="evidence" value="ECO:0007669"/>
    <property type="project" value="InterPro"/>
</dbReference>
<dbReference type="GO" id="GO:0006412">
    <property type="term" value="P:translation"/>
    <property type="evidence" value="ECO:0007669"/>
    <property type="project" value="UniProtKB-UniRule"/>
</dbReference>
<dbReference type="FunFam" id="1.20.58.110:FF:000001">
    <property type="entry name" value="30S ribosomal protein S20"/>
    <property type="match status" value="1"/>
</dbReference>
<dbReference type="Gene3D" id="1.20.58.110">
    <property type="entry name" value="Ribosomal protein S20"/>
    <property type="match status" value="1"/>
</dbReference>
<dbReference type="HAMAP" id="MF_00500">
    <property type="entry name" value="Ribosomal_bS20"/>
    <property type="match status" value="1"/>
</dbReference>
<dbReference type="InterPro" id="IPR002583">
    <property type="entry name" value="Ribosomal_bS20"/>
</dbReference>
<dbReference type="InterPro" id="IPR036510">
    <property type="entry name" value="Ribosomal_bS20_sf"/>
</dbReference>
<dbReference type="NCBIfam" id="TIGR00029">
    <property type="entry name" value="S20"/>
    <property type="match status" value="1"/>
</dbReference>
<dbReference type="PANTHER" id="PTHR33398">
    <property type="entry name" value="30S RIBOSOMAL PROTEIN S20"/>
    <property type="match status" value="1"/>
</dbReference>
<dbReference type="PANTHER" id="PTHR33398:SF1">
    <property type="entry name" value="SMALL RIBOSOMAL SUBUNIT PROTEIN BS20C"/>
    <property type="match status" value="1"/>
</dbReference>
<dbReference type="Pfam" id="PF01649">
    <property type="entry name" value="Ribosomal_S20p"/>
    <property type="match status" value="1"/>
</dbReference>
<dbReference type="SUPFAM" id="SSF46992">
    <property type="entry name" value="Ribosomal protein S20"/>
    <property type="match status" value="1"/>
</dbReference>
<evidence type="ECO:0000255" key="1">
    <source>
        <dbReference type="HAMAP-Rule" id="MF_00500"/>
    </source>
</evidence>
<evidence type="ECO:0000305" key="2"/>
<name>RS20_BRUMB</name>
<keyword id="KW-0687">Ribonucleoprotein</keyword>
<keyword id="KW-0689">Ribosomal protein</keyword>
<keyword id="KW-0694">RNA-binding</keyword>
<keyword id="KW-0699">rRNA-binding</keyword>
<gene>
    <name evidence="1" type="primary">rpsT</name>
    <name type="ordered locus">BMEA_A2246</name>
</gene>
<sequence length="88" mass="9669">MANTPSAKKAVRKIAARTEINKSRRSRVRTFVRKLEDALLSGDKQAAEVAFKAVEPELMRAASKGVVHKNTAARKVSRLAKRVKALNA</sequence>
<proteinExistence type="inferred from homology"/>
<reference key="1">
    <citation type="submission" date="2009-03" db="EMBL/GenBank/DDBJ databases">
        <title>Brucella melitensis ATCC 23457 whole genome shotgun sequencing project.</title>
        <authorList>
            <person name="Setubal J.C."/>
            <person name="Boyle S."/>
            <person name="Crasta O.R."/>
            <person name="Gillespie J.J."/>
            <person name="Kenyon R.W."/>
            <person name="Lu J."/>
            <person name="Mane S."/>
            <person name="Nagrani S."/>
            <person name="Shallom J.M."/>
            <person name="Shallom S."/>
            <person name="Shukla M."/>
            <person name="Snyder E.E."/>
            <person name="Sobral B.W."/>
            <person name="Wattam A.R."/>
            <person name="Will R."/>
            <person name="Williams K."/>
            <person name="Yoo H."/>
            <person name="Munk C."/>
            <person name="Tapia R."/>
            <person name="Han C."/>
            <person name="Detter J.C."/>
            <person name="Bruce D."/>
            <person name="Brettin T.S."/>
        </authorList>
    </citation>
    <scope>NUCLEOTIDE SEQUENCE [LARGE SCALE GENOMIC DNA]</scope>
    <source>
        <strain>ATCC 23457</strain>
    </source>
</reference>
<feature type="chain" id="PRO_1000194228" description="Small ribosomal subunit protein bS20">
    <location>
        <begin position="1"/>
        <end position="88"/>
    </location>
</feature>
<comment type="function">
    <text evidence="1">Binds directly to 16S ribosomal RNA.</text>
</comment>
<comment type="similarity">
    <text evidence="1">Belongs to the bacterial ribosomal protein bS20 family.</text>
</comment>